<name>NOVA1_HUMAN</name>
<keyword id="KW-0002">3D-structure</keyword>
<keyword id="KW-0025">Alternative splicing</keyword>
<keyword id="KW-0507">mRNA processing</keyword>
<keyword id="KW-0508">mRNA splicing</keyword>
<keyword id="KW-0524">Neurogenesis</keyword>
<keyword id="KW-0539">Nucleus</keyword>
<keyword id="KW-0597">Phosphoprotein</keyword>
<keyword id="KW-1267">Proteomics identification</keyword>
<keyword id="KW-1185">Reference proteome</keyword>
<keyword id="KW-0677">Repeat</keyword>
<keyword id="KW-0694">RNA-binding</keyword>
<feature type="chain" id="PRO_0000050116" description="RNA-binding protein Nova-1">
    <location>
        <begin position="1"/>
        <end position="507"/>
    </location>
</feature>
<feature type="domain" description="KH 1" evidence="3">
    <location>
        <begin position="49"/>
        <end position="116"/>
    </location>
</feature>
<feature type="domain" description="KH 2" evidence="3">
    <location>
        <begin position="171"/>
        <end position="237"/>
    </location>
</feature>
<feature type="domain" description="KH 3" evidence="3">
    <location>
        <begin position="421"/>
        <end position="488"/>
    </location>
</feature>
<feature type="region of interest" description="Disordered" evidence="4">
    <location>
        <begin position="1"/>
        <end position="44"/>
    </location>
</feature>
<feature type="region of interest" description="Disordered" evidence="4">
    <location>
        <begin position="139"/>
        <end position="171"/>
    </location>
</feature>
<feature type="region of interest" description="Required for RNA binding" evidence="5">
    <location>
        <begin position="419"/>
        <end position="503"/>
    </location>
</feature>
<feature type="short sequence motif" description="Bipartite nuclear localization signal" evidence="2">
    <location>
        <begin position="27"/>
        <end position="43"/>
    </location>
</feature>
<feature type="compositionally biased region" description="Low complexity" evidence="4">
    <location>
        <begin position="150"/>
        <end position="169"/>
    </location>
</feature>
<feature type="modified residue" description="Phosphoserine" evidence="1">
    <location>
        <position position="154"/>
    </location>
</feature>
<feature type="splice variant" id="VSP_060046" description="In isoform 3.">
    <location>
        <begin position="150"/>
        <end position="173"/>
    </location>
</feature>
<feature type="splice variant" id="VSP_060047" description="In isoform 2.">
    <original>VKIIVPNS</original>
    <variation>KHNISWIS</variation>
    <location>
        <begin position="174"/>
        <end position="181"/>
    </location>
</feature>
<feature type="splice variant" id="VSP_060048" description="In isoform 2.">
    <location>
        <begin position="182"/>
        <end position="507"/>
    </location>
</feature>
<feature type="strand" evidence="12">
    <location>
        <begin position="50"/>
        <end position="57"/>
    </location>
</feature>
<feature type="helix" evidence="12">
    <location>
        <begin position="58"/>
        <end position="65"/>
    </location>
</feature>
<feature type="helix" evidence="12">
    <location>
        <begin position="67"/>
        <end position="69"/>
    </location>
</feature>
<feature type="helix" evidence="12">
    <location>
        <begin position="70"/>
        <end position="79"/>
    </location>
</feature>
<feature type="strand" evidence="12">
    <location>
        <begin position="82"/>
        <end position="85"/>
    </location>
</feature>
<feature type="strand" evidence="12">
    <location>
        <begin position="95"/>
        <end position="104"/>
    </location>
</feature>
<feature type="helix" evidence="12">
    <location>
        <begin position="106"/>
        <end position="120"/>
    </location>
</feature>
<feature type="strand" evidence="12">
    <location>
        <begin position="173"/>
        <end position="179"/>
    </location>
</feature>
<feature type="helix" evidence="12">
    <location>
        <begin position="180"/>
        <end position="187"/>
    </location>
</feature>
<feature type="helix" evidence="12">
    <location>
        <begin position="189"/>
        <end position="191"/>
    </location>
</feature>
<feature type="helix" evidence="12">
    <location>
        <begin position="192"/>
        <end position="200"/>
    </location>
</feature>
<feature type="strand" evidence="12">
    <location>
        <begin position="204"/>
        <end position="207"/>
    </location>
</feature>
<feature type="strand" evidence="12">
    <location>
        <begin position="218"/>
        <end position="226"/>
    </location>
</feature>
<feature type="helix" evidence="12">
    <location>
        <begin position="227"/>
        <end position="242"/>
    </location>
</feature>
<feature type="strand" evidence="11">
    <location>
        <begin position="422"/>
        <end position="429"/>
    </location>
</feature>
<feature type="turn" evidence="11">
    <location>
        <begin position="430"/>
        <end position="433"/>
    </location>
</feature>
<feature type="helix" evidence="11">
    <location>
        <begin position="434"/>
        <end position="437"/>
    </location>
</feature>
<feature type="helix" evidence="11">
    <location>
        <begin position="439"/>
        <end position="441"/>
    </location>
</feature>
<feature type="helix" evidence="11">
    <location>
        <begin position="442"/>
        <end position="451"/>
    </location>
</feature>
<feature type="strand" evidence="11">
    <location>
        <begin position="454"/>
        <end position="457"/>
    </location>
</feature>
<feature type="strand" evidence="11">
    <location>
        <begin position="469"/>
        <end position="476"/>
    </location>
</feature>
<feature type="helix" evidence="11">
    <location>
        <begin position="478"/>
        <end position="491"/>
    </location>
</feature>
<comment type="function">
    <text evidence="1 5">Functions to regulate alternative splicing in neurons by binding pre-mRNA in a sequence-specific manner to activate exon inclusion or exclusion. It binds specifically to the sequences 5'-YCAY-3' and regulates splicing in only a subset of regulated exons (PubMed:10811881). Binding to an exonic 5'-YCAY-3' cluster changes the protein complexes assembled on pre-mRNA, blocking U1 snRNP binding and exon inclusion, whereas binding to an intronic 5'-YCAY-3' cluster enhances spliceosome assembly and exon inclusion. Binding to 5'-YCAY-3' clusters results in a local and asymmetric action to regulate spliceosome assembly and alternative splicing in neurons. Binding to an exonic 5'-YCAY-3' cluster changed the protein complexes assembled on pre-mRNA, blocking U1 snRNP (small nuclear ribonucleoprotein) binding and exon inclusion, whereas binding to an intronic 5'-YCAY-3' cluster enhanced spliceosome assembly and exon inclusion. With NOVA1, they perform unique biological functions in different brain areas and cell types. Autoregulates its own expression by acting as a splicing repressor. Acts to activate the inclusion of exon E3A in the glycine receptor alpha-2 chain and of exon E9 in gamma-aminobutyric-acid receptor gamma-2 subunit via a distal downstream UCAU-rich intronic splicing enhancer. Acts to regulate a novel glycine receptor alpha-2 chain splice variant (alpha-2N) in developing spinal cord (By similarity).</text>
</comment>
<comment type="subunit">
    <text evidence="1">Interacts with PTBP2; the interaction is direct.</text>
</comment>
<comment type="interaction">
    <interactant intactId="EBI-726123">
        <id>P51513</id>
    </interactant>
    <interactant intactId="EBI-9008430">
        <id>P18507</id>
        <label>GABRG2</label>
    </interactant>
    <organismsDiffer>false</organismsDiffer>
    <experiments>2</experiments>
</comment>
<comment type="interaction">
    <interactant intactId="EBI-726123">
        <id>P51513</id>
    </interactant>
    <interactant intactId="EBI-1182222">
        <id>P50406</id>
        <label>HTR6</label>
    </interactant>
    <organismsDiffer>false</organismsDiffer>
    <experiments>9</experiments>
</comment>
<comment type="subcellular location">
    <subcellularLocation>
        <location evidence="1">Nucleus</location>
    </subcellularLocation>
</comment>
<comment type="alternative products">
    <event type="alternative splicing"/>
    <isoform>
        <id>P51513-4</id>
        <name>1</name>
        <sequence type="displayed"/>
    </isoform>
    <isoform>
        <id>P51513-2</id>
        <name>2</name>
        <name>Tumor</name>
        <sequence type="described" ref="VSP_060047 VSP_060048"/>
    </isoform>
    <isoform>
        <id>P51513-5</id>
        <name>3</name>
        <sequence type="described" ref="VSP_060046"/>
    </isoform>
</comment>
<comment type="tissue specificity">
    <text evidence="6">Expressed in cerebellum, brain stem, hippocampus, and frontal cortex.</text>
</comment>
<comment type="domain">
    <text evidence="5 7">The KH domain consists of approximately 70 amino acids and includes a conserved hydrophobic core, an invariant Gly-X-X-Gly motif, and an additional variable segment (PubMed:10811881). The third KH domain (KH3) binds a hairpin RNA loop containing the 5'-UCAY-3' motif on targeted molecules (PubMed:10811881). RNA binding by KH3 requires residues C-terminal to the KH domain (PubMed:10811881).</text>
</comment>
<comment type="miscellaneous">
    <text evidence="9">Target antigen in a human paraneoplastic motor disorder, paraneoplastic opsoclonus-myoclonus ataxia (POMA). POMA antibodies block NOVAl RNA binding.</text>
</comment>
<comment type="sequence caution" evidence="8">
    <conflict type="miscellaneous discrepancy">
        <sequence resource="EMBL-CDS" id="AAA16022"/>
    </conflict>
    <text>Probable cloning artifact leading to an insertion into the sequence.</text>
</comment>
<gene>
    <name evidence="10" type="primary">NOVA1</name>
</gene>
<accession>P51513</accession>
<accession>A8K0S4</accession>
<accession>A8K4Q7</accession>
<accession>D3DS81</accession>
<accession>D3DS82</accession>
<accession>Q6B004</accession>
<proteinExistence type="evidence at protein level"/>
<reference key="1">
    <citation type="journal article" date="1993" name="Neuron">
        <title>Nova, the paraneoplastic Ri antigen, is homologous to an RNA-binding protein and is specifically expressed in the developing motor system.</title>
        <authorList>
            <person name="Buckanovich R.J."/>
            <person name="Posner J.B."/>
            <person name="Darnell R.B."/>
        </authorList>
    </citation>
    <scope>NUCLEOTIDE SEQUENCE [MRNA] (ISOFORMS 1 AND 2)</scope>
    <scope>TISSUE SPECIFICITY</scope>
    <source>
        <tissue>Cerebellum</tissue>
        <tissue>Hippocampus</tissue>
    </source>
</reference>
<reference key="2">
    <citation type="journal article" date="2004" name="Nat. Genet.">
        <title>Complete sequencing and characterization of 21,243 full-length human cDNAs.</title>
        <authorList>
            <person name="Ota T."/>
            <person name="Suzuki Y."/>
            <person name="Nishikawa T."/>
            <person name="Otsuki T."/>
            <person name="Sugiyama T."/>
            <person name="Irie R."/>
            <person name="Wakamatsu A."/>
            <person name="Hayashi K."/>
            <person name="Sato H."/>
            <person name="Nagai K."/>
            <person name="Kimura K."/>
            <person name="Makita H."/>
            <person name="Sekine M."/>
            <person name="Obayashi M."/>
            <person name="Nishi T."/>
            <person name="Shibahara T."/>
            <person name="Tanaka T."/>
            <person name="Ishii S."/>
            <person name="Yamamoto J."/>
            <person name="Saito K."/>
            <person name="Kawai Y."/>
            <person name="Isono Y."/>
            <person name="Nakamura Y."/>
            <person name="Nagahari K."/>
            <person name="Murakami K."/>
            <person name="Yasuda T."/>
            <person name="Iwayanagi T."/>
            <person name="Wagatsuma M."/>
            <person name="Shiratori A."/>
            <person name="Sudo H."/>
            <person name="Hosoiri T."/>
            <person name="Kaku Y."/>
            <person name="Kodaira H."/>
            <person name="Kondo H."/>
            <person name="Sugawara M."/>
            <person name="Takahashi M."/>
            <person name="Kanda K."/>
            <person name="Yokoi T."/>
            <person name="Furuya T."/>
            <person name="Kikkawa E."/>
            <person name="Omura Y."/>
            <person name="Abe K."/>
            <person name="Kamihara K."/>
            <person name="Katsuta N."/>
            <person name="Sato K."/>
            <person name="Tanikawa M."/>
            <person name="Yamazaki M."/>
            <person name="Ninomiya K."/>
            <person name="Ishibashi T."/>
            <person name="Yamashita H."/>
            <person name="Murakawa K."/>
            <person name="Fujimori K."/>
            <person name="Tanai H."/>
            <person name="Kimata M."/>
            <person name="Watanabe M."/>
            <person name="Hiraoka S."/>
            <person name="Chiba Y."/>
            <person name="Ishida S."/>
            <person name="Ono Y."/>
            <person name="Takiguchi S."/>
            <person name="Watanabe S."/>
            <person name="Yosida M."/>
            <person name="Hotuta T."/>
            <person name="Kusano J."/>
            <person name="Kanehori K."/>
            <person name="Takahashi-Fujii A."/>
            <person name="Hara H."/>
            <person name="Tanase T.-O."/>
            <person name="Nomura Y."/>
            <person name="Togiya S."/>
            <person name="Komai F."/>
            <person name="Hara R."/>
            <person name="Takeuchi K."/>
            <person name="Arita M."/>
            <person name="Imose N."/>
            <person name="Musashino K."/>
            <person name="Yuuki H."/>
            <person name="Oshima A."/>
            <person name="Sasaki N."/>
            <person name="Aotsuka S."/>
            <person name="Yoshikawa Y."/>
            <person name="Matsunawa H."/>
            <person name="Ichihara T."/>
            <person name="Shiohata N."/>
            <person name="Sano S."/>
            <person name="Moriya S."/>
            <person name="Momiyama H."/>
            <person name="Satoh N."/>
            <person name="Takami S."/>
            <person name="Terashima Y."/>
            <person name="Suzuki O."/>
            <person name="Nakagawa S."/>
            <person name="Senoh A."/>
            <person name="Mizoguchi H."/>
            <person name="Goto Y."/>
            <person name="Shimizu F."/>
            <person name="Wakebe H."/>
            <person name="Hishigaki H."/>
            <person name="Watanabe T."/>
            <person name="Sugiyama A."/>
            <person name="Takemoto M."/>
            <person name="Kawakami B."/>
            <person name="Yamazaki M."/>
            <person name="Watanabe K."/>
            <person name="Kumagai A."/>
            <person name="Itakura S."/>
            <person name="Fukuzumi Y."/>
            <person name="Fujimori Y."/>
            <person name="Komiyama M."/>
            <person name="Tashiro H."/>
            <person name="Tanigami A."/>
            <person name="Fujiwara T."/>
            <person name="Ono T."/>
            <person name="Yamada K."/>
            <person name="Fujii Y."/>
            <person name="Ozaki K."/>
            <person name="Hirao M."/>
            <person name="Ohmori Y."/>
            <person name="Kawabata A."/>
            <person name="Hikiji T."/>
            <person name="Kobatake N."/>
            <person name="Inagaki H."/>
            <person name="Ikema Y."/>
            <person name="Okamoto S."/>
            <person name="Okitani R."/>
            <person name="Kawakami T."/>
            <person name="Noguchi S."/>
            <person name="Itoh T."/>
            <person name="Shigeta K."/>
            <person name="Senba T."/>
            <person name="Matsumura K."/>
            <person name="Nakajima Y."/>
            <person name="Mizuno T."/>
            <person name="Morinaga M."/>
            <person name="Sasaki M."/>
            <person name="Togashi T."/>
            <person name="Oyama M."/>
            <person name="Hata H."/>
            <person name="Watanabe M."/>
            <person name="Komatsu T."/>
            <person name="Mizushima-Sugano J."/>
            <person name="Satoh T."/>
            <person name="Shirai Y."/>
            <person name="Takahashi Y."/>
            <person name="Nakagawa K."/>
            <person name="Okumura K."/>
            <person name="Nagase T."/>
            <person name="Nomura N."/>
            <person name="Kikuchi H."/>
            <person name="Masuho Y."/>
            <person name="Yamashita R."/>
            <person name="Nakai K."/>
            <person name="Yada T."/>
            <person name="Nakamura Y."/>
            <person name="Ohara O."/>
            <person name="Isogai T."/>
            <person name="Sugano S."/>
        </authorList>
    </citation>
    <scope>NUCLEOTIDE SEQUENCE [LARGE SCALE MRNA] (ISOFORMS 1 AND 2)</scope>
    <source>
        <tissue>Amygdala</tissue>
    </source>
</reference>
<reference key="3">
    <citation type="submission" date="2005-09" db="EMBL/GenBank/DDBJ databases">
        <authorList>
            <person name="Mural R.J."/>
            <person name="Istrail S."/>
            <person name="Sutton G.G."/>
            <person name="Florea L."/>
            <person name="Halpern A.L."/>
            <person name="Mobarry C.M."/>
            <person name="Lippert R."/>
            <person name="Walenz B."/>
            <person name="Shatkay H."/>
            <person name="Dew I."/>
            <person name="Miller J.R."/>
            <person name="Flanigan M.J."/>
            <person name="Edwards N.J."/>
            <person name="Bolanos R."/>
            <person name="Fasulo D."/>
            <person name="Halldorsson B.V."/>
            <person name="Hannenhalli S."/>
            <person name="Turner R."/>
            <person name="Yooseph S."/>
            <person name="Lu F."/>
            <person name="Nusskern D.R."/>
            <person name="Shue B.C."/>
            <person name="Zheng X.H."/>
            <person name="Zhong F."/>
            <person name="Delcher A.L."/>
            <person name="Huson D.H."/>
            <person name="Kravitz S.A."/>
            <person name="Mouchard L."/>
            <person name="Reinert K."/>
            <person name="Remington K.A."/>
            <person name="Clark A.G."/>
            <person name="Waterman M.S."/>
            <person name="Eichler E.E."/>
            <person name="Adams M.D."/>
            <person name="Hunkapiller M.W."/>
            <person name="Myers E.W."/>
            <person name="Venter J.C."/>
        </authorList>
    </citation>
    <scope>NUCLEOTIDE SEQUENCE [LARGE SCALE GENOMIC DNA]</scope>
</reference>
<reference key="4">
    <citation type="journal article" date="2004" name="Genome Res.">
        <title>The status, quality, and expansion of the NIH full-length cDNA project: the Mammalian Gene Collection (MGC).</title>
        <authorList>
            <consortium name="The MGC Project Team"/>
        </authorList>
    </citation>
    <scope>NUCLEOTIDE SEQUENCE [LARGE SCALE MRNA] (ISOFORM 1)</scope>
    <source>
        <tissue>Brain</tissue>
    </source>
</reference>
<reference key="5">
    <citation type="submission" date="1996-04" db="EMBL/GenBank/DDBJ databases">
        <authorList>
            <person name="Dmitrenko V.V."/>
            <person name="Garifulin O.M."/>
            <person name="Shostak K.A."/>
            <person name="Smikodub A.I."/>
            <person name="Kavsan V.M."/>
        </authorList>
    </citation>
    <scope>NUCLEOTIDE SEQUENCE [MRNA] OF 1-34</scope>
    <source>
        <tissue>Fetal brain</tissue>
    </source>
</reference>
<reference key="6">
    <citation type="journal article" date="1996" name="J. Neurosci.">
        <title>The onconeural antigen Nova-1 is a neuron-specific RNA-binding protein, the activity of which is inhibited by paraneoplastic antibodies.</title>
        <authorList>
            <person name="Buckanovich R.J."/>
            <person name="Yang Y.Y."/>
            <person name="Darnell R.B."/>
        </authorList>
    </citation>
    <scope>MISCELLANEOUS</scope>
</reference>
<reference key="7">
    <citation type="journal article" date="2000" name="Proc. Natl. Acad. Sci. U.S.A.">
        <title>The tetranucleotide UCAY directs the specific recognition of RNA by the Nova K-homology 3 domain.</title>
        <authorList>
            <person name="Jensen K.B."/>
            <person name="Musunuru K."/>
            <person name="Lewis H.A."/>
            <person name="Burley S.K."/>
            <person name="Darnell R.B."/>
        </authorList>
    </citation>
    <scope>FUNCTION</scope>
    <scope>DOMAIN</scope>
</reference>
<reference key="8">
    <citation type="journal article" date="2009" name="Anal. Chem.">
        <title>Lys-N and trypsin cover complementary parts of the phosphoproteome in a refined SCX-based approach.</title>
        <authorList>
            <person name="Gauci S."/>
            <person name="Helbig A.O."/>
            <person name="Slijper M."/>
            <person name="Krijgsveld J."/>
            <person name="Heck A.J."/>
            <person name="Mohammed S."/>
        </authorList>
    </citation>
    <scope>IDENTIFICATION BY MASS SPECTROMETRY [LARGE SCALE ANALYSIS]</scope>
</reference>
<reference key="9">
    <citation type="journal article" date="2011" name="Sci. Signal.">
        <title>System-wide temporal characterization of the proteome and phosphoproteome of human embryonic stem cell differentiation.</title>
        <authorList>
            <person name="Rigbolt K.T."/>
            <person name="Prokhorova T.A."/>
            <person name="Akimov V."/>
            <person name="Henningsen J."/>
            <person name="Johansen P.T."/>
            <person name="Kratchmarova I."/>
            <person name="Kassem M."/>
            <person name="Mann M."/>
            <person name="Olsen J.V."/>
            <person name="Blagoev B."/>
        </authorList>
    </citation>
    <scope>IDENTIFICATION BY MASS SPECTROMETRY [LARGE SCALE ANALYSIS]</scope>
</reference>
<reference key="10">
    <citation type="journal article" date="1999" name="Structure">
        <title>Crystal structures of Nova-1 and Nova-2 K-homology RNA-binding domains.</title>
        <authorList>
            <person name="Lewis H.A."/>
            <person name="Chen H."/>
            <person name="Edo C."/>
            <person name="Buckanovich R.J."/>
            <person name="Yang Y.Y.-L."/>
            <person name="Musunuru K."/>
            <person name="Zhong R."/>
            <person name="Darnell R.B."/>
            <person name="Burley S.K."/>
        </authorList>
    </citation>
    <scope>X-RAY CRYSTALLOGRAPHY (2.0 ANGSTROMS) OF 421-492</scope>
</reference>
<organism>
    <name type="scientific">Homo sapiens</name>
    <name type="common">Human</name>
    <dbReference type="NCBI Taxonomy" id="9606"/>
    <lineage>
        <taxon>Eukaryota</taxon>
        <taxon>Metazoa</taxon>
        <taxon>Chordata</taxon>
        <taxon>Craniata</taxon>
        <taxon>Vertebrata</taxon>
        <taxon>Euteleostomi</taxon>
        <taxon>Mammalia</taxon>
        <taxon>Eutheria</taxon>
        <taxon>Euarchontoglires</taxon>
        <taxon>Primates</taxon>
        <taxon>Haplorrhini</taxon>
        <taxon>Catarrhini</taxon>
        <taxon>Hominidae</taxon>
        <taxon>Homo</taxon>
    </lineage>
</organism>
<evidence type="ECO:0000250" key="1">
    <source>
        <dbReference type="UniProtKB" id="Q9JKN6"/>
    </source>
</evidence>
<evidence type="ECO:0000255" key="2"/>
<evidence type="ECO:0000255" key="3">
    <source>
        <dbReference type="PROSITE-ProRule" id="PRU00117"/>
    </source>
</evidence>
<evidence type="ECO:0000256" key="4">
    <source>
        <dbReference type="SAM" id="MobiDB-lite"/>
    </source>
</evidence>
<evidence type="ECO:0000269" key="5">
    <source>
    </source>
</evidence>
<evidence type="ECO:0000269" key="6">
    <source>
    </source>
</evidence>
<evidence type="ECO:0000303" key="7">
    <source>
    </source>
</evidence>
<evidence type="ECO:0000305" key="8"/>
<evidence type="ECO:0000305" key="9">
    <source>
    </source>
</evidence>
<evidence type="ECO:0000312" key="10">
    <source>
        <dbReference type="HGNC" id="HGNC:7886"/>
    </source>
</evidence>
<evidence type="ECO:0007829" key="11">
    <source>
        <dbReference type="PDB" id="1DT4"/>
    </source>
</evidence>
<evidence type="ECO:0007829" key="12">
    <source>
        <dbReference type="PDB" id="2ANR"/>
    </source>
</evidence>
<protein>
    <recommendedName>
        <fullName evidence="8">RNA-binding protein Nova-1</fullName>
    </recommendedName>
    <alternativeName>
        <fullName>Neuro-oncological ventral antigen 1</fullName>
    </alternativeName>
    <alternativeName>
        <fullName>Onconeural ventral antigen 1</fullName>
    </alternativeName>
    <alternativeName>
        <fullName>Paraneoplastic Ri antigen</fullName>
    </alternativeName>
    <alternativeName>
        <fullName>Ventral neuron-specific protein 1</fullName>
    </alternativeName>
</protein>
<dbReference type="EMBL" id="U04840">
    <property type="protein sequence ID" value="AAA16022.1"/>
    <property type="status" value="ALT_SEQ"/>
    <property type="molecule type" value="mRNA"/>
</dbReference>
<dbReference type="EMBL" id="AK289639">
    <property type="protein sequence ID" value="BAF82328.1"/>
    <property type="molecule type" value="mRNA"/>
</dbReference>
<dbReference type="EMBL" id="AK291022">
    <property type="protein sequence ID" value="BAF83711.1"/>
    <property type="molecule type" value="mRNA"/>
</dbReference>
<dbReference type="EMBL" id="AL079343">
    <property type="status" value="NOT_ANNOTATED_CDS"/>
    <property type="molecule type" value="Genomic_DNA"/>
</dbReference>
<dbReference type="EMBL" id="AL132716">
    <property type="status" value="NOT_ANNOTATED_CDS"/>
    <property type="molecule type" value="Genomic_DNA"/>
</dbReference>
<dbReference type="EMBL" id="CH471078">
    <property type="protein sequence ID" value="EAW65990.1"/>
    <property type="molecule type" value="Genomic_DNA"/>
</dbReference>
<dbReference type="EMBL" id="CH471078">
    <property type="protein sequence ID" value="EAW65991.1"/>
    <property type="molecule type" value="Genomic_DNA"/>
</dbReference>
<dbReference type="EMBL" id="CH471078">
    <property type="protein sequence ID" value="EAW65992.1"/>
    <property type="molecule type" value="Genomic_DNA"/>
</dbReference>
<dbReference type="EMBL" id="CH471078">
    <property type="protein sequence ID" value="EAW65993.1"/>
    <property type="molecule type" value="Genomic_DNA"/>
</dbReference>
<dbReference type="EMBL" id="CH471078">
    <property type="protein sequence ID" value="EAW65995.1"/>
    <property type="molecule type" value="Genomic_DNA"/>
</dbReference>
<dbReference type="EMBL" id="BC075038">
    <property type="protein sequence ID" value="AAH75038.1"/>
    <property type="molecule type" value="mRNA"/>
</dbReference>
<dbReference type="EMBL" id="BC075039">
    <property type="protein sequence ID" value="AAH75039.1"/>
    <property type="molecule type" value="mRNA"/>
</dbReference>
<dbReference type="EMBL" id="Z70771">
    <property type="protein sequence ID" value="CAA94810.1"/>
    <property type="molecule type" value="mRNA"/>
</dbReference>
<dbReference type="CCDS" id="CCDS32060.1">
    <molecule id="P51513-5"/>
</dbReference>
<dbReference type="CCDS" id="CCDS32061.1">
    <molecule id="P51513-4"/>
</dbReference>
<dbReference type="CCDS" id="CCDS9635.1">
    <molecule id="P51513-2"/>
</dbReference>
<dbReference type="PIR" id="I38489">
    <property type="entry name" value="I38489"/>
</dbReference>
<dbReference type="RefSeq" id="NP_002506.2">
    <molecule id="P51513-4"/>
    <property type="nucleotide sequence ID" value="NM_002515.3"/>
</dbReference>
<dbReference type="RefSeq" id="NP_006480.2">
    <molecule id="P51513-5"/>
    <property type="nucleotide sequence ID" value="NM_006489.3"/>
</dbReference>
<dbReference type="RefSeq" id="NP_006482.1">
    <molecule id="P51513-2"/>
    <property type="nucleotide sequence ID" value="NM_006491.3"/>
</dbReference>
<dbReference type="PDB" id="1DT4">
    <property type="method" value="X-ray"/>
    <property type="resolution" value="2.60 A"/>
    <property type="chains" value="A=421-492"/>
</dbReference>
<dbReference type="PDB" id="2ANN">
    <property type="method" value="X-ray"/>
    <property type="resolution" value="2.30 A"/>
    <property type="chains" value="A=49-246"/>
</dbReference>
<dbReference type="PDB" id="2ANR">
    <property type="method" value="X-ray"/>
    <property type="resolution" value="1.94 A"/>
    <property type="chains" value="A=49-246"/>
</dbReference>
<dbReference type="PDBsum" id="1DT4"/>
<dbReference type="PDBsum" id="2ANN"/>
<dbReference type="PDBsum" id="2ANR"/>
<dbReference type="SMR" id="P51513"/>
<dbReference type="BioGRID" id="110919">
    <property type="interactions" value="16"/>
</dbReference>
<dbReference type="FunCoup" id="P51513">
    <property type="interactions" value="4422"/>
</dbReference>
<dbReference type="IntAct" id="P51513">
    <property type="interactions" value="15"/>
</dbReference>
<dbReference type="MINT" id="P51513"/>
<dbReference type="STRING" id="9606.ENSP00000438875"/>
<dbReference type="iPTMnet" id="P51513"/>
<dbReference type="PhosphoSitePlus" id="P51513"/>
<dbReference type="BioMuta" id="NOVA1"/>
<dbReference type="DMDM" id="1709303"/>
<dbReference type="jPOST" id="P51513"/>
<dbReference type="MassIVE" id="P51513"/>
<dbReference type="PaxDb" id="9606-ENSP00000438875"/>
<dbReference type="PeptideAtlas" id="P51513"/>
<dbReference type="ProteomicsDB" id="12757"/>
<dbReference type="ProteomicsDB" id="56316">
    <molecule id="P51513-2"/>
</dbReference>
<dbReference type="ProteomicsDB" id="56318">
    <molecule id="P51513-4"/>
</dbReference>
<dbReference type="Pumba" id="P51513"/>
<dbReference type="TopDownProteomics" id="P51513-2">
    <molecule id="P51513-2"/>
</dbReference>
<dbReference type="Antibodypedia" id="133">
    <property type="antibodies" value="258 antibodies from 33 providers"/>
</dbReference>
<dbReference type="DNASU" id="4857"/>
<dbReference type="Ensembl" id="ENST00000344429.9">
    <molecule id="P51513-2"/>
    <property type="protein sequence ID" value="ENSP00000342387.5"/>
    <property type="gene ID" value="ENSG00000139910.20"/>
</dbReference>
<dbReference type="Ensembl" id="ENST00000465357.6">
    <molecule id="P51513-5"/>
    <property type="protein sequence ID" value="ENSP00000447391.1"/>
    <property type="gene ID" value="ENSG00000139910.20"/>
</dbReference>
<dbReference type="Ensembl" id="ENST00000539517.7">
    <molecule id="P51513-4"/>
    <property type="protein sequence ID" value="ENSP00000438875.2"/>
    <property type="gene ID" value="ENSG00000139910.20"/>
</dbReference>
<dbReference type="GeneID" id="4857"/>
<dbReference type="KEGG" id="hsa:4857"/>
<dbReference type="MANE-Select" id="ENST00000539517.7">
    <property type="protein sequence ID" value="ENSP00000438875.2"/>
    <property type="RefSeq nucleotide sequence ID" value="NM_002515.3"/>
    <property type="RefSeq protein sequence ID" value="NP_002506.2"/>
</dbReference>
<dbReference type="UCSC" id="uc001wpy.4">
    <molecule id="P51513-4"/>
    <property type="organism name" value="human"/>
</dbReference>
<dbReference type="AGR" id="HGNC:7886"/>
<dbReference type="CTD" id="4857"/>
<dbReference type="DisGeNET" id="4857"/>
<dbReference type="GeneCards" id="NOVA1"/>
<dbReference type="HGNC" id="HGNC:7886">
    <property type="gene designation" value="NOVA1"/>
</dbReference>
<dbReference type="HPA" id="ENSG00000139910">
    <property type="expression patterns" value="Tissue enhanced (brain)"/>
</dbReference>
<dbReference type="MIM" id="602157">
    <property type="type" value="gene"/>
</dbReference>
<dbReference type="neXtProt" id="NX_P51513"/>
<dbReference type="OpenTargets" id="ENSG00000139910"/>
<dbReference type="PharmGKB" id="PA31688"/>
<dbReference type="VEuPathDB" id="HostDB:ENSG00000139910"/>
<dbReference type="eggNOG" id="KOG2191">
    <property type="taxonomic scope" value="Eukaryota"/>
</dbReference>
<dbReference type="GeneTree" id="ENSGT00940000155573"/>
<dbReference type="HOGENOM" id="CLU_022670_1_1_1"/>
<dbReference type="InParanoid" id="P51513"/>
<dbReference type="OMA" id="KYANTPF"/>
<dbReference type="OrthoDB" id="441329at2759"/>
<dbReference type="PAN-GO" id="P51513">
    <property type="GO annotations" value="5 GO annotations based on evolutionary models"/>
</dbReference>
<dbReference type="PhylomeDB" id="P51513"/>
<dbReference type="TreeFam" id="TF316981"/>
<dbReference type="PathwayCommons" id="P51513"/>
<dbReference type="SignaLink" id="P51513"/>
<dbReference type="BioGRID-ORCS" id="4857">
    <property type="hits" value="13 hits in 1149 CRISPR screens"/>
</dbReference>
<dbReference type="ChiTaRS" id="NOVA1">
    <property type="organism name" value="human"/>
</dbReference>
<dbReference type="EvolutionaryTrace" id="P51513"/>
<dbReference type="GeneWiki" id="NOVA1"/>
<dbReference type="GenomeRNAi" id="4857"/>
<dbReference type="Pharos" id="P51513">
    <property type="development level" value="Tbio"/>
</dbReference>
<dbReference type="PRO" id="PR:P51513"/>
<dbReference type="Proteomes" id="UP000005640">
    <property type="component" value="Chromosome 14"/>
</dbReference>
<dbReference type="RNAct" id="P51513">
    <property type="molecule type" value="protein"/>
</dbReference>
<dbReference type="Bgee" id="ENSG00000139910">
    <property type="expression patterns" value="Expressed in cortical plate and 171 other cell types or tissues"/>
</dbReference>
<dbReference type="ExpressionAtlas" id="P51513">
    <property type="expression patterns" value="baseline and differential"/>
</dbReference>
<dbReference type="GO" id="GO:0005737">
    <property type="term" value="C:cytoplasm"/>
    <property type="evidence" value="ECO:0000318"/>
    <property type="project" value="GO_Central"/>
</dbReference>
<dbReference type="GO" id="GO:0043231">
    <property type="term" value="C:intracellular membrane-bounded organelle"/>
    <property type="evidence" value="ECO:0000314"/>
    <property type="project" value="HPA"/>
</dbReference>
<dbReference type="GO" id="GO:0005730">
    <property type="term" value="C:nucleolus"/>
    <property type="evidence" value="ECO:0000314"/>
    <property type="project" value="HPA"/>
</dbReference>
<dbReference type="GO" id="GO:0005654">
    <property type="term" value="C:nucleoplasm"/>
    <property type="evidence" value="ECO:0000314"/>
    <property type="project" value="HPA"/>
</dbReference>
<dbReference type="GO" id="GO:0005634">
    <property type="term" value="C:nucleus"/>
    <property type="evidence" value="ECO:0000318"/>
    <property type="project" value="GO_Central"/>
</dbReference>
<dbReference type="GO" id="GO:0003730">
    <property type="term" value="F:mRNA 3'-UTR binding"/>
    <property type="evidence" value="ECO:0007669"/>
    <property type="project" value="Ensembl"/>
</dbReference>
<dbReference type="GO" id="GO:0003729">
    <property type="term" value="F:mRNA binding"/>
    <property type="evidence" value="ECO:0000250"/>
    <property type="project" value="UniProtKB"/>
</dbReference>
<dbReference type="GO" id="GO:0003723">
    <property type="term" value="F:RNA binding"/>
    <property type="evidence" value="ECO:0007005"/>
    <property type="project" value="UniProtKB"/>
</dbReference>
<dbReference type="GO" id="GO:1990825">
    <property type="term" value="F:sequence-specific mRNA binding"/>
    <property type="evidence" value="ECO:0000314"/>
    <property type="project" value="UniProtKB"/>
</dbReference>
<dbReference type="GO" id="GO:0000398">
    <property type="term" value="P:mRNA splicing, via spliceosome"/>
    <property type="evidence" value="ECO:0000318"/>
    <property type="project" value="GO_Central"/>
</dbReference>
<dbReference type="GO" id="GO:0120163">
    <property type="term" value="P:negative regulation of cold-induced thermogenesis"/>
    <property type="evidence" value="ECO:0000250"/>
    <property type="project" value="YuBioLab"/>
</dbReference>
<dbReference type="GO" id="GO:0007399">
    <property type="term" value="P:nervous system development"/>
    <property type="evidence" value="ECO:0007669"/>
    <property type="project" value="UniProtKB-KW"/>
</dbReference>
<dbReference type="GO" id="GO:0000381">
    <property type="term" value="P:regulation of alternative mRNA splicing, via spliceosome"/>
    <property type="evidence" value="ECO:0000250"/>
    <property type="project" value="UniProtKB"/>
</dbReference>
<dbReference type="GO" id="GO:0006396">
    <property type="term" value="P:RNA processing"/>
    <property type="evidence" value="ECO:0000304"/>
    <property type="project" value="ProtInc"/>
</dbReference>
<dbReference type="GO" id="GO:0008380">
    <property type="term" value="P:RNA splicing"/>
    <property type="evidence" value="ECO:0000304"/>
    <property type="project" value="ProtInc"/>
</dbReference>
<dbReference type="CDD" id="cd22435">
    <property type="entry name" value="KH-I_NOVA_rpt1"/>
    <property type="match status" value="1"/>
</dbReference>
<dbReference type="CDD" id="cd22436">
    <property type="entry name" value="KH-I_NOVA_rpt2"/>
    <property type="match status" value="1"/>
</dbReference>
<dbReference type="CDD" id="cd09031">
    <property type="entry name" value="KH-I_NOVA_rpt3"/>
    <property type="match status" value="1"/>
</dbReference>
<dbReference type="FunFam" id="3.30.1370.10:FF:000019">
    <property type="entry name" value="RNA-binding protein Nova-1 isoform 1"/>
    <property type="match status" value="1"/>
</dbReference>
<dbReference type="FunFam" id="3.30.1370.10:FF:000020">
    <property type="entry name" value="RNA-binding protein Nova-1 isoform 1"/>
    <property type="match status" value="1"/>
</dbReference>
<dbReference type="FunFam" id="3.30.1370.10:FF:000022">
    <property type="entry name" value="RNA-binding protein Nova-1 isoform 1"/>
    <property type="match status" value="1"/>
</dbReference>
<dbReference type="Gene3D" id="3.30.1370.10">
    <property type="entry name" value="K Homology domain, type 1"/>
    <property type="match status" value="3"/>
</dbReference>
<dbReference type="InterPro" id="IPR047275">
    <property type="entry name" value="KH-I_NOVA_rpt1"/>
</dbReference>
<dbReference type="InterPro" id="IPR047276">
    <property type="entry name" value="KH-I_NOVA_rpt2"/>
</dbReference>
<dbReference type="InterPro" id="IPR047274">
    <property type="entry name" value="KH-I_NOVA_rpt3"/>
</dbReference>
<dbReference type="InterPro" id="IPR004087">
    <property type="entry name" value="KH_dom"/>
</dbReference>
<dbReference type="InterPro" id="IPR004088">
    <property type="entry name" value="KH_dom_type_1"/>
</dbReference>
<dbReference type="InterPro" id="IPR036612">
    <property type="entry name" value="KH_dom_type_1_sf"/>
</dbReference>
<dbReference type="PANTHER" id="PTHR10288">
    <property type="entry name" value="KH DOMAIN CONTAINING RNA BINDING PROTEIN"/>
    <property type="match status" value="1"/>
</dbReference>
<dbReference type="Pfam" id="PF00013">
    <property type="entry name" value="KH_1"/>
    <property type="match status" value="3"/>
</dbReference>
<dbReference type="SMART" id="SM00322">
    <property type="entry name" value="KH"/>
    <property type="match status" value="3"/>
</dbReference>
<dbReference type="SUPFAM" id="SSF54791">
    <property type="entry name" value="Eukaryotic type KH-domain (KH-domain type I)"/>
    <property type="match status" value="3"/>
</dbReference>
<dbReference type="PROSITE" id="PS50084">
    <property type="entry name" value="KH_TYPE_1"/>
    <property type="match status" value="3"/>
</dbReference>
<sequence length="507" mass="51727">MMAAAPIQQNGTHTGVPIDLDPPDSRKRPLEAPPEAGSTKRTNTGEDGQYFLKVLIPSYAAGSIIGKGGQTIVQLQKETGATIKLSKSKDFYPGTTERVCLIQGTVEALNAVHGFIAEKIREMPQNVAKTEPVSILQPQTTVNPDRIKQTLPSSPTTTKSSPSDPMTTSRANQVKIIVPNSTAGLIIGKGGATVKAVMEQSGAWVQLSQKPDGINLQERVVTVSGEPEQNRKAVELIIQKIQEDPQSGSCLNISYANVTGPVANSNPTGSPYANTAEVLPTAAAAAGLLGHANLAGVAAFPAVLSGFTGNDLVAITSALNTLASYGYNLNTLGLGLSQAAATGALAAAAASANPAAAAANLLATYASEASASGSTAGGTAGTFALGSLAAATAATNGYFGAASPLAASAILGTEKSTDGSKDVVEIAVPENLVGAILGKGGKTLVEYQELTGARIQISKKGEFVPGTRNRKVTITGTPAATQAAQYLITQRITYEQGVRAANPQKVG</sequence>